<proteinExistence type="inferred from homology"/>
<keyword id="KW-1185">Reference proteome</keyword>
<keyword id="KW-0686">Riboflavin biosynthesis</keyword>
<keyword id="KW-0808">Transferase</keyword>
<reference key="1">
    <citation type="submission" date="2007-10" db="EMBL/GenBank/DDBJ databases">
        <title>Complete sequence of chromosome 1 of Burkholderia multivorans ATCC 17616.</title>
        <authorList>
            <person name="Copeland A."/>
            <person name="Lucas S."/>
            <person name="Lapidus A."/>
            <person name="Barry K."/>
            <person name="Glavina del Rio T."/>
            <person name="Dalin E."/>
            <person name="Tice H."/>
            <person name="Pitluck S."/>
            <person name="Chain P."/>
            <person name="Malfatti S."/>
            <person name="Shin M."/>
            <person name="Vergez L."/>
            <person name="Schmutz J."/>
            <person name="Larimer F."/>
            <person name="Land M."/>
            <person name="Hauser L."/>
            <person name="Kyrpides N."/>
            <person name="Kim E."/>
            <person name="Tiedje J."/>
            <person name="Richardson P."/>
        </authorList>
    </citation>
    <scope>NUCLEOTIDE SEQUENCE [LARGE SCALE GENOMIC DNA]</scope>
    <source>
        <strain>ATCC 17616 / 249</strain>
    </source>
</reference>
<reference key="2">
    <citation type="submission" date="2007-04" db="EMBL/GenBank/DDBJ databases">
        <title>Complete genome sequence of Burkholderia multivorans ATCC 17616.</title>
        <authorList>
            <person name="Ohtsubo Y."/>
            <person name="Yamashita A."/>
            <person name="Kurokawa K."/>
            <person name="Takami H."/>
            <person name="Yuhara S."/>
            <person name="Nishiyama E."/>
            <person name="Endo R."/>
            <person name="Miyazaki R."/>
            <person name="Ono A."/>
            <person name="Yano K."/>
            <person name="Ito M."/>
            <person name="Sota M."/>
            <person name="Yuji N."/>
            <person name="Hattori M."/>
            <person name="Tsuda M."/>
        </authorList>
    </citation>
    <scope>NUCLEOTIDE SEQUENCE [LARGE SCALE GENOMIC DNA]</scope>
    <source>
        <strain>ATCC 17616 / 249</strain>
    </source>
</reference>
<name>RISB_BURM1</name>
<gene>
    <name evidence="1" type="primary">ribH</name>
    <name type="ordered locus">Bmul_2441</name>
    <name type="ordered locus">BMULJ_00792</name>
</gene>
<dbReference type="EC" id="2.5.1.78" evidence="1"/>
<dbReference type="EMBL" id="CP000868">
    <property type="protein sequence ID" value="ABX16126.1"/>
    <property type="molecule type" value="Genomic_DNA"/>
</dbReference>
<dbReference type="EMBL" id="AP009385">
    <property type="protein sequence ID" value="BAG42752.1"/>
    <property type="molecule type" value="Genomic_DNA"/>
</dbReference>
<dbReference type="RefSeq" id="WP_006400826.1">
    <property type="nucleotide sequence ID" value="NC_010804.1"/>
</dbReference>
<dbReference type="SMR" id="A9AF24"/>
<dbReference type="STRING" id="395019.BMULJ_00792"/>
<dbReference type="GeneID" id="89569227"/>
<dbReference type="KEGG" id="bmj:BMULJ_00792"/>
<dbReference type="KEGG" id="bmu:Bmul_2441"/>
<dbReference type="eggNOG" id="COG0054">
    <property type="taxonomic scope" value="Bacteria"/>
</dbReference>
<dbReference type="HOGENOM" id="CLU_089358_1_2_4"/>
<dbReference type="UniPathway" id="UPA00275">
    <property type="reaction ID" value="UER00404"/>
</dbReference>
<dbReference type="Proteomes" id="UP000008815">
    <property type="component" value="Chromosome 1"/>
</dbReference>
<dbReference type="GO" id="GO:0005829">
    <property type="term" value="C:cytosol"/>
    <property type="evidence" value="ECO:0007669"/>
    <property type="project" value="TreeGrafter"/>
</dbReference>
<dbReference type="GO" id="GO:0009349">
    <property type="term" value="C:riboflavin synthase complex"/>
    <property type="evidence" value="ECO:0007669"/>
    <property type="project" value="InterPro"/>
</dbReference>
<dbReference type="GO" id="GO:0000906">
    <property type="term" value="F:6,7-dimethyl-8-ribityllumazine synthase activity"/>
    <property type="evidence" value="ECO:0007669"/>
    <property type="project" value="UniProtKB-UniRule"/>
</dbReference>
<dbReference type="GO" id="GO:0009231">
    <property type="term" value="P:riboflavin biosynthetic process"/>
    <property type="evidence" value="ECO:0007669"/>
    <property type="project" value="UniProtKB-UniRule"/>
</dbReference>
<dbReference type="CDD" id="cd09209">
    <property type="entry name" value="Lumazine_synthase-I"/>
    <property type="match status" value="1"/>
</dbReference>
<dbReference type="Gene3D" id="3.40.50.960">
    <property type="entry name" value="Lumazine/riboflavin synthase"/>
    <property type="match status" value="1"/>
</dbReference>
<dbReference type="HAMAP" id="MF_00178">
    <property type="entry name" value="Lumazine_synth"/>
    <property type="match status" value="1"/>
</dbReference>
<dbReference type="InterPro" id="IPR034964">
    <property type="entry name" value="LS"/>
</dbReference>
<dbReference type="InterPro" id="IPR002180">
    <property type="entry name" value="LS/RS"/>
</dbReference>
<dbReference type="InterPro" id="IPR036467">
    <property type="entry name" value="LS/RS_sf"/>
</dbReference>
<dbReference type="NCBIfam" id="TIGR00114">
    <property type="entry name" value="lumazine-synth"/>
    <property type="match status" value="1"/>
</dbReference>
<dbReference type="PANTHER" id="PTHR21058:SF0">
    <property type="entry name" value="6,7-DIMETHYL-8-RIBITYLLUMAZINE SYNTHASE"/>
    <property type="match status" value="1"/>
</dbReference>
<dbReference type="PANTHER" id="PTHR21058">
    <property type="entry name" value="6,7-DIMETHYL-8-RIBITYLLUMAZINE SYNTHASE DMRL SYNTHASE LUMAZINE SYNTHASE"/>
    <property type="match status" value="1"/>
</dbReference>
<dbReference type="Pfam" id="PF00885">
    <property type="entry name" value="DMRL_synthase"/>
    <property type="match status" value="1"/>
</dbReference>
<dbReference type="SUPFAM" id="SSF52121">
    <property type="entry name" value="Lumazine synthase"/>
    <property type="match status" value="1"/>
</dbReference>
<accession>A9AF24</accession>
<organism>
    <name type="scientific">Burkholderia multivorans (strain ATCC 17616 / 249)</name>
    <dbReference type="NCBI Taxonomy" id="395019"/>
    <lineage>
        <taxon>Bacteria</taxon>
        <taxon>Pseudomonadati</taxon>
        <taxon>Pseudomonadota</taxon>
        <taxon>Betaproteobacteria</taxon>
        <taxon>Burkholderiales</taxon>
        <taxon>Burkholderiaceae</taxon>
        <taxon>Burkholderia</taxon>
        <taxon>Burkholderia cepacia complex</taxon>
    </lineage>
</organism>
<sequence>MEIGQYQPNLEGDGLRIGIVQSRFNEPVCNGLADACVEELERLGVAGEDVLLVSVPGALEIPLALQKLAESGQFDALIALGAVIRGETYHFELVSNESGAGITRIALDFNVPIANAVLTTENDEQAVARMTEKGRDAARVAVEMANLTMALDQLGDDDEDEEEDEDDEEERA</sequence>
<feature type="chain" id="PRO_1000098167" description="6,7-dimethyl-8-ribityllumazine synthase">
    <location>
        <begin position="1"/>
        <end position="172"/>
    </location>
</feature>
<feature type="region of interest" description="Disordered" evidence="2">
    <location>
        <begin position="150"/>
        <end position="172"/>
    </location>
</feature>
<feature type="compositionally biased region" description="Acidic residues" evidence="2">
    <location>
        <begin position="154"/>
        <end position="172"/>
    </location>
</feature>
<feature type="active site" description="Proton donor" evidence="1">
    <location>
        <position position="90"/>
    </location>
</feature>
<feature type="binding site" evidence="1">
    <location>
        <position position="24"/>
    </location>
    <ligand>
        <name>5-amino-6-(D-ribitylamino)uracil</name>
        <dbReference type="ChEBI" id="CHEBI:15934"/>
    </ligand>
</feature>
<feature type="binding site" evidence="1">
    <location>
        <begin position="58"/>
        <end position="60"/>
    </location>
    <ligand>
        <name>5-amino-6-(D-ribitylamino)uracil</name>
        <dbReference type="ChEBI" id="CHEBI:15934"/>
    </ligand>
</feature>
<feature type="binding site" evidence="1">
    <location>
        <begin position="82"/>
        <end position="84"/>
    </location>
    <ligand>
        <name>5-amino-6-(D-ribitylamino)uracil</name>
        <dbReference type="ChEBI" id="CHEBI:15934"/>
    </ligand>
</feature>
<feature type="binding site" evidence="1">
    <location>
        <begin position="87"/>
        <end position="88"/>
    </location>
    <ligand>
        <name>(2S)-2-hydroxy-3-oxobutyl phosphate</name>
        <dbReference type="ChEBI" id="CHEBI:58830"/>
    </ligand>
</feature>
<feature type="binding site" evidence="1">
    <location>
        <position position="115"/>
    </location>
    <ligand>
        <name>5-amino-6-(D-ribitylamino)uracil</name>
        <dbReference type="ChEBI" id="CHEBI:15934"/>
    </ligand>
</feature>
<feature type="binding site" evidence="1">
    <location>
        <position position="129"/>
    </location>
    <ligand>
        <name>(2S)-2-hydroxy-3-oxobutyl phosphate</name>
        <dbReference type="ChEBI" id="CHEBI:58830"/>
    </ligand>
</feature>
<evidence type="ECO:0000255" key="1">
    <source>
        <dbReference type="HAMAP-Rule" id="MF_00178"/>
    </source>
</evidence>
<evidence type="ECO:0000256" key="2">
    <source>
        <dbReference type="SAM" id="MobiDB-lite"/>
    </source>
</evidence>
<protein>
    <recommendedName>
        <fullName evidence="1">6,7-dimethyl-8-ribityllumazine synthase</fullName>
        <shortName evidence="1">DMRL synthase</shortName>
        <shortName evidence="1">LS</shortName>
        <shortName evidence="1">Lumazine synthase</shortName>
        <ecNumber evidence="1">2.5.1.78</ecNumber>
    </recommendedName>
</protein>
<comment type="function">
    <text evidence="1">Catalyzes the formation of 6,7-dimethyl-8-ribityllumazine by condensation of 5-amino-6-(D-ribitylamino)uracil with 3,4-dihydroxy-2-butanone 4-phosphate. This is the penultimate step in the biosynthesis of riboflavin.</text>
</comment>
<comment type="catalytic activity">
    <reaction evidence="1">
        <text>(2S)-2-hydroxy-3-oxobutyl phosphate + 5-amino-6-(D-ribitylamino)uracil = 6,7-dimethyl-8-(1-D-ribityl)lumazine + phosphate + 2 H2O + H(+)</text>
        <dbReference type="Rhea" id="RHEA:26152"/>
        <dbReference type="ChEBI" id="CHEBI:15377"/>
        <dbReference type="ChEBI" id="CHEBI:15378"/>
        <dbReference type="ChEBI" id="CHEBI:15934"/>
        <dbReference type="ChEBI" id="CHEBI:43474"/>
        <dbReference type="ChEBI" id="CHEBI:58201"/>
        <dbReference type="ChEBI" id="CHEBI:58830"/>
        <dbReference type="EC" id="2.5.1.78"/>
    </reaction>
</comment>
<comment type="pathway">
    <text evidence="1">Cofactor biosynthesis; riboflavin biosynthesis; riboflavin from 2-hydroxy-3-oxobutyl phosphate and 5-amino-6-(D-ribitylamino)uracil: step 1/2.</text>
</comment>
<comment type="similarity">
    <text evidence="1">Belongs to the DMRL synthase family.</text>
</comment>